<feature type="chain" id="PRO_1000136383" description="Der GTPase-activating protein YihI">
    <location>
        <begin position="1"/>
        <end position="169"/>
    </location>
</feature>
<feature type="region of interest" description="Disordered" evidence="2">
    <location>
        <begin position="1"/>
        <end position="98"/>
    </location>
</feature>
<feature type="region of interest" description="Disordered" evidence="2">
    <location>
        <begin position="144"/>
        <end position="169"/>
    </location>
</feature>
<feature type="compositionally biased region" description="Basic residues" evidence="2">
    <location>
        <begin position="10"/>
        <end position="19"/>
    </location>
</feature>
<feature type="compositionally biased region" description="Basic and acidic residues" evidence="2">
    <location>
        <begin position="20"/>
        <end position="30"/>
    </location>
</feature>
<feature type="compositionally biased region" description="Basic residues" evidence="2">
    <location>
        <begin position="31"/>
        <end position="40"/>
    </location>
</feature>
<feature type="compositionally biased region" description="Polar residues" evidence="2">
    <location>
        <begin position="49"/>
        <end position="58"/>
    </location>
</feature>
<feature type="compositionally biased region" description="Acidic residues" evidence="2">
    <location>
        <begin position="147"/>
        <end position="159"/>
    </location>
</feature>
<feature type="compositionally biased region" description="Basic and acidic residues" evidence="2">
    <location>
        <begin position="160"/>
        <end position="169"/>
    </location>
</feature>
<keyword id="KW-0343">GTPase activation</keyword>
<keyword id="KW-0690">Ribosome biogenesis</keyword>
<sequence length="169" mass="19059">MKPSSSNSRSKGHAKARRKTREELDQEARDRKRQKKRRGHAPGSRAAGGNTTSGSKGQNAPKDPRIGSKTPIPLGVTEKVTKQHKPKSEKPMLSPQAELELLETDERLDALLERLEAGETLSAEEQSWVDAKLDRIDELMQKLGLSYDDDEEEEEDEKQEDMMRLLRGN</sequence>
<accession>B7NFG1</accession>
<proteinExistence type="inferred from homology"/>
<protein>
    <recommendedName>
        <fullName evidence="1">Der GTPase-activating protein YihI</fullName>
    </recommendedName>
</protein>
<reference key="1">
    <citation type="journal article" date="2009" name="PLoS Genet.">
        <title>Organised genome dynamics in the Escherichia coli species results in highly diverse adaptive paths.</title>
        <authorList>
            <person name="Touchon M."/>
            <person name="Hoede C."/>
            <person name="Tenaillon O."/>
            <person name="Barbe V."/>
            <person name="Baeriswyl S."/>
            <person name="Bidet P."/>
            <person name="Bingen E."/>
            <person name="Bonacorsi S."/>
            <person name="Bouchier C."/>
            <person name="Bouvet O."/>
            <person name="Calteau A."/>
            <person name="Chiapello H."/>
            <person name="Clermont O."/>
            <person name="Cruveiller S."/>
            <person name="Danchin A."/>
            <person name="Diard M."/>
            <person name="Dossat C."/>
            <person name="Karoui M.E."/>
            <person name="Frapy E."/>
            <person name="Garry L."/>
            <person name="Ghigo J.M."/>
            <person name="Gilles A.M."/>
            <person name="Johnson J."/>
            <person name="Le Bouguenec C."/>
            <person name="Lescat M."/>
            <person name="Mangenot S."/>
            <person name="Martinez-Jehanne V."/>
            <person name="Matic I."/>
            <person name="Nassif X."/>
            <person name="Oztas S."/>
            <person name="Petit M.A."/>
            <person name="Pichon C."/>
            <person name="Rouy Z."/>
            <person name="Ruf C.S."/>
            <person name="Schneider D."/>
            <person name="Tourret J."/>
            <person name="Vacherie B."/>
            <person name="Vallenet D."/>
            <person name="Medigue C."/>
            <person name="Rocha E.P.C."/>
            <person name="Denamur E."/>
        </authorList>
    </citation>
    <scope>NUCLEOTIDE SEQUENCE [LARGE SCALE GENOMIC DNA]</scope>
    <source>
        <strain>UMN026 / ExPEC</strain>
    </source>
</reference>
<evidence type="ECO:0000255" key="1">
    <source>
        <dbReference type="HAMAP-Rule" id="MF_01058"/>
    </source>
</evidence>
<evidence type="ECO:0000256" key="2">
    <source>
        <dbReference type="SAM" id="MobiDB-lite"/>
    </source>
</evidence>
<gene>
    <name evidence="1" type="primary">yihI</name>
    <name type="ordered locus">ECUMN_4389</name>
</gene>
<comment type="function">
    <text evidence="1">A GTPase-activating protein (GAP) that modifies Der/EngA GTPase function. May play a role in ribosome biogenesis.</text>
</comment>
<comment type="subunit">
    <text evidence="1">Interacts with Der.</text>
</comment>
<comment type="similarity">
    <text evidence="1">Belongs to the YihI family.</text>
</comment>
<organism>
    <name type="scientific">Escherichia coli O17:K52:H18 (strain UMN026 / ExPEC)</name>
    <dbReference type="NCBI Taxonomy" id="585056"/>
    <lineage>
        <taxon>Bacteria</taxon>
        <taxon>Pseudomonadati</taxon>
        <taxon>Pseudomonadota</taxon>
        <taxon>Gammaproteobacteria</taxon>
        <taxon>Enterobacterales</taxon>
        <taxon>Enterobacteriaceae</taxon>
        <taxon>Escherichia</taxon>
    </lineage>
</organism>
<dbReference type="EMBL" id="CU928163">
    <property type="protein sequence ID" value="CAR15517.1"/>
    <property type="molecule type" value="Genomic_DNA"/>
</dbReference>
<dbReference type="RefSeq" id="WP_001295266.1">
    <property type="nucleotide sequence ID" value="NC_011751.1"/>
</dbReference>
<dbReference type="RefSeq" id="YP_002415010.1">
    <property type="nucleotide sequence ID" value="NC_011751.1"/>
</dbReference>
<dbReference type="SMR" id="B7NFG1"/>
<dbReference type="STRING" id="585056.ECUMN_4389"/>
<dbReference type="GeneID" id="75204333"/>
<dbReference type="KEGG" id="eum:ECUMN_4389"/>
<dbReference type="PATRIC" id="fig|585056.7.peg.4554"/>
<dbReference type="HOGENOM" id="CLU_094104_2_0_6"/>
<dbReference type="Proteomes" id="UP000007097">
    <property type="component" value="Chromosome"/>
</dbReference>
<dbReference type="GO" id="GO:0005096">
    <property type="term" value="F:GTPase activator activity"/>
    <property type="evidence" value="ECO:0007669"/>
    <property type="project" value="UniProtKB-KW"/>
</dbReference>
<dbReference type="GO" id="GO:0042254">
    <property type="term" value="P:ribosome biogenesis"/>
    <property type="evidence" value="ECO:0007669"/>
    <property type="project" value="UniProtKB-KW"/>
</dbReference>
<dbReference type="HAMAP" id="MF_01058">
    <property type="entry name" value="GAP_YihI"/>
    <property type="match status" value="1"/>
</dbReference>
<dbReference type="InterPro" id="IPR007336">
    <property type="entry name" value="YihI"/>
</dbReference>
<dbReference type="NCBIfam" id="NF003560">
    <property type="entry name" value="PRK05244.1-1"/>
    <property type="match status" value="1"/>
</dbReference>
<dbReference type="Pfam" id="PF04220">
    <property type="entry name" value="YihI"/>
    <property type="match status" value="1"/>
</dbReference>
<name>YIHI_ECOLU</name>